<organism>
    <name type="scientific">Arabis hirsuta</name>
    <name type="common">Hairy rock-cress</name>
    <name type="synonym">Turritis hirsuta</name>
    <dbReference type="NCBI Taxonomy" id="78191"/>
    <lineage>
        <taxon>Eukaryota</taxon>
        <taxon>Viridiplantae</taxon>
        <taxon>Streptophyta</taxon>
        <taxon>Embryophyta</taxon>
        <taxon>Tracheophyta</taxon>
        <taxon>Spermatophyta</taxon>
        <taxon>Magnoliopsida</taxon>
        <taxon>eudicotyledons</taxon>
        <taxon>Gunneridae</taxon>
        <taxon>Pentapetalae</taxon>
        <taxon>rosids</taxon>
        <taxon>malvids</taxon>
        <taxon>Brassicales</taxon>
        <taxon>Brassicaceae</taxon>
        <taxon>Arabideae</taxon>
        <taxon>Arabis</taxon>
    </lineage>
</organism>
<reference key="1">
    <citation type="submission" date="2007-03" db="EMBL/GenBank/DDBJ databases">
        <title>Sequencing analysis of Arabis hirsuta chloroplast DNA.</title>
        <authorList>
            <person name="Hosouchi T."/>
            <person name="Tsuruoka H."/>
            <person name="Kotani H."/>
        </authorList>
    </citation>
    <scope>NUCLEOTIDE SEQUENCE [LARGE SCALE GENOMIC DNA]</scope>
</reference>
<accession>A4QK12</accession>
<gene>
    <name evidence="1" type="primary">psbM</name>
</gene>
<geneLocation type="chloroplast"/>
<dbReference type="EMBL" id="AP009369">
    <property type="protein sequence ID" value="BAF50017.1"/>
    <property type="molecule type" value="Genomic_DNA"/>
</dbReference>
<dbReference type="RefSeq" id="YP_001123193.1">
    <property type="nucleotide sequence ID" value="NC_009268.1"/>
</dbReference>
<dbReference type="SMR" id="A4QK12"/>
<dbReference type="GeneID" id="4962568"/>
<dbReference type="GO" id="GO:0009535">
    <property type="term" value="C:chloroplast thylakoid membrane"/>
    <property type="evidence" value="ECO:0007669"/>
    <property type="project" value="UniProtKB-SubCell"/>
</dbReference>
<dbReference type="GO" id="GO:0009523">
    <property type="term" value="C:photosystem II"/>
    <property type="evidence" value="ECO:0007669"/>
    <property type="project" value="UniProtKB-KW"/>
</dbReference>
<dbReference type="GO" id="GO:0019684">
    <property type="term" value="P:photosynthesis, light reaction"/>
    <property type="evidence" value="ECO:0007669"/>
    <property type="project" value="InterPro"/>
</dbReference>
<dbReference type="HAMAP" id="MF_00438">
    <property type="entry name" value="PSII_PsbM"/>
    <property type="match status" value="1"/>
</dbReference>
<dbReference type="InterPro" id="IPR007826">
    <property type="entry name" value="PSII_PsbM"/>
</dbReference>
<dbReference type="InterPro" id="IPR037269">
    <property type="entry name" value="PSII_PsbM_sf"/>
</dbReference>
<dbReference type="NCBIfam" id="TIGR03038">
    <property type="entry name" value="PS_II_psbM"/>
    <property type="match status" value="1"/>
</dbReference>
<dbReference type="PANTHER" id="PTHR35774">
    <property type="entry name" value="PHOTOSYSTEM II REACTION CENTER PROTEIN M"/>
    <property type="match status" value="1"/>
</dbReference>
<dbReference type="PANTHER" id="PTHR35774:SF1">
    <property type="entry name" value="PHOTOSYSTEM II REACTION CENTER PROTEIN M"/>
    <property type="match status" value="1"/>
</dbReference>
<dbReference type="Pfam" id="PF05151">
    <property type="entry name" value="PsbM"/>
    <property type="match status" value="1"/>
</dbReference>
<dbReference type="SUPFAM" id="SSF161033">
    <property type="entry name" value="Photosystem II reaction center protein M, PsbM"/>
    <property type="match status" value="1"/>
</dbReference>
<comment type="function">
    <text evidence="1">One of the components of the core complex of photosystem II (PSII). PSII is a light-driven water:plastoquinone oxidoreductase that uses light energy to abstract electrons from H(2)O, generating O(2) and a proton gradient subsequently used for ATP formation. It consists of a core antenna complex that captures photons, and an electron transfer chain that converts photonic excitation into a charge separation. This subunit is found at the monomer-monomer interface.</text>
</comment>
<comment type="subunit">
    <text evidence="1">PSII is composed of 1 copy each of membrane proteins PsbA, PsbB, PsbC, PsbD, PsbE, PsbF, PsbH, PsbI, PsbJ, PsbK, PsbL, PsbM, PsbT, PsbX, PsbY, PsbZ, Psb30/Ycf12, at least 3 peripheral proteins of the oxygen-evolving complex and a large number of cofactors. It forms dimeric complexes.</text>
</comment>
<comment type="subcellular location">
    <subcellularLocation>
        <location evidence="1">Plastid</location>
        <location evidence="1">Chloroplast thylakoid membrane</location>
        <topology evidence="1">Single-pass membrane protein</topology>
    </subcellularLocation>
</comment>
<comment type="similarity">
    <text evidence="1">Belongs to the PsbM family.</text>
</comment>
<feature type="chain" id="PRO_0000325719" description="Photosystem II reaction center protein M">
    <location>
        <begin position="1"/>
        <end position="34"/>
    </location>
</feature>
<feature type="transmembrane region" description="Helical" evidence="1">
    <location>
        <begin position="5"/>
        <end position="25"/>
    </location>
</feature>
<proteinExistence type="inferred from homology"/>
<sequence>MEVNILAFIATALFILVPTAFLLIIYVKTVSQNN</sequence>
<keyword id="KW-0150">Chloroplast</keyword>
<keyword id="KW-0472">Membrane</keyword>
<keyword id="KW-0602">Photosynthesis</keyword>
<keyword id="KW-0604">Photosystem II</keyword>
<keyword id="KW-0934">Plastid</keyword>
<keyword id="KW-0674">Reaction center</keyword>
<keyword id="KW-0793">Thylakoid</keyword>
<keyword id="KW-0812">Transmembrane</keyword>
<keyword id="KW-1133">Transmembrane helix</keyword>
<protein>
    <recommendedName>
        <fullName evidence="1">Photosystem II reaction center protein M</fullName>
        <shortName evidence="1">PSII-M</shortName>
    </recommendedName>
</protein>
<name>PSBM_ARAHI</name>
<evidence type="ECO:0000255" key="1">
    <source>
        <dbReference type="HAMAP-Rule" id="MF_00438"/>
    </source>
</evidence>